<reference key="1">
    <citation type="journal article" date="2005" name="Proc. Natl. Acad. Sci. U.S.A.">
        <title>Complete genome sequence of the probiotic lactic acid bacterium Lactobacillus acidophilus NCFM.</title>
        <authorList>
            <person name="Altermann E."/>
            <person name="Russell W.M."/>
            <person name="Azcarate-Peril M.A."/>
            <person name="Barrangou R."/>
            <person name="Buck B.L."/>
            <person name="McAuliffe O."/>
            <person name="Souther N."/>
            <person name="Dobson A."/>
            <person name="Duong T."/>
            <person name="Callanan M."/>
            <person name="Lick S."/>
            <person name="Hamrick A."/>
            <person name="Cano R."/>
            <person name="Klaenhammer T.R."/>
        </authorList>
    </citation>
    <scope>NUCLEOTIDE SEQUENCE [LARGE SCALE GENOMIC DNA]</scope>
    <source>
        <strain>ATCC 700396 / NCK56 / N2 / NCFM</strain>
    </source>
</reference>
<feature type="chain" id="PRO_0000140966" description="Thymidylate synthase">
    <location>
        <begin position="1"/>
        <end position="318"/>
    </location>
</feature>
<feature type="active site" description="Nucleophile" evidence="1">
    <location>
        <position position="200"/>
    </location>
</feature>
<feature type="binding site" description="in other chain" evidence="1">
    <location>
        <position position="25"/>
    </location>
    <ligand>
        <name>dUMP</name>
        <dbReference type="ChEBI" id="CHEBI:246422"/>
        <note>ligand shared between dimeric partners</note>
    </ligand>
</feature>
<feature type="binding site" evidence="1">
    <location>
        <begin position="180"/>
        <end position="181"/>
    </location>
    <ligand>
        <name>dUMP</name>
        <dbReference type="ChEBI" id="CHEBI:246422"/>
        <note>ligand shared between dimeric partners</note>
    </ligand>
</feature>
<feature type="binding site" description="in other chain" evidence="1">
    <location>
        <begin position="220"/>
        <end position="223"/>
    </location>
    <ligand>
        <name>dUMP</name>
        <dbReference type="ChEBI" id="CHEBI:246422"/>
        <note>ligand shared between dimeric partners</note>
    </ligand>
</feature>
<feature type="binding site" evidence="1">
    <location>
        <position position="223"/>
    </location>
    <ligand>
        <name>(6R)-5,10-methylene-5,6,7,8-tetrahydrofolate</name>
        <dbReference type="ChEBI" id="CHEBI:15636"/>
    </ligand>
</feature>
<feature type="binding site" description="in other chain" evidence="1">
    <location>
        <position position="231"/>
    </location>
    <ligand>
        <name>dUMP</name>
        <dbReference type="ChEBI" id="CHEBI:246422"/>
        <note>ligand shared between dimeric partners</note>
    </ligand>
</feature>
<feature type="binding site" description="in other chain" evidence="1">
    <location>
        <begin position="261"/>
        <end position="263"/>
    </location>
    <ligand>
        <name>dUMP</name>
        <dbReference type="ChEBI" id="CHEBI:246422"/>
        <note>ligand shared between dimeric partners</note>
    </ligand>
</feature>
<feature type="binding site" evidence="1">
    <location>
        <position position="317"/>
    </location>
    <ligand>
        <name>(6R)-5,10-methylene-5,6,7,8-tetrahydrofolate</name>
        <dbReference type="ChEBI" id="CHEBI:15636"/>
    </ligand>
</feature>
<organism>
    <name type="scientific">Lactobacillus acidophilus (strain ATCC 700396 / NCK56 / N2 / NCFM)</name>
    <dbReference type="NCBI Taxonomy" id="272621"/>
    <lineage>
        <taxon>Bacteria</taxon>
        <taxon>Bacillati</taxon>
        <taxon>Bacillota</taxon>
        <taxon>Bacilli</taxon>
        <taxon>Lactobacillales</taxon>
        <taxon>Lactobacillaceae</taxon>
        <taxon>Lactobacillus</taxon>
    </lineage>
</organism>
<evidence type="ECO:0000255" key="1">
    <source>
        <dbReference type="HAMAP-Rule" id="MF_00008"/>
    </source>
</evidence>
<protein>
    <recommendedName>
        <fullName evidence="1">Thymidylate synthase</fullName>
        <shortName evidence="1">TS</shortName>
        <shortName evidence="1">TSase</shortName>
        <ecNumber evidence="1">2.1.1.45</ecNumber>
    </recommendedName>
</protein>
<dbReference type="EC" id="2.1.1.45" evidence="1"/>
<dbReference type="EMBL" id="CP000033">
    <property type="protein sequence ID" value="AAV42758.1"/>
    <property type="molecule type" value="Genomic_DNA"/>
</dbReference>
<dbReference type="RefSeq" id="WP_003546979.1">
    <property type="nucleotide sequence ID" value="NC_006814.3"/>
</dbReference>
<dbReference type="RefSeq" id="YP_193789.1">
    <property type="nucleotide sequence ID" value="NC_006814.3"/>
</dbReference>
<dbReference type="SMR" id="Q5FKL6"/>
<dbReference type="STRING" id="272621.LBA0901"/>
<dbReference type="KEGG" id="lac:LBA0901"/>
<dbReference type="PATRIC" id="fig|272621.13.peg.859"/>
<dbReference type="eggNOG" id="COG0207">
    <property type="taxonomic scope" value="Bacteria"/>
</dbReference>
<dbReference type="HOGENOM" id="CLU_021669_0_0_9"/>
<dbReference type="OrthoDB" id="9774633at2"/>
<dbReference type="BioCyc" id="LACI272621:G1G49-908-MONOMER"/>
<dbReference type="UniPathway" id="UPA00575"/>
<dbReference type="Proteomes" id="UP000006381">
    <property type="component" value="Chromosome"/>
</dbReference>
<dbReference type="GO" id="GO:0005829">
    <property type="term" value="C:cytosol"/>
    <property type="evidence" value="ECO:0007669"/>
    <property type="project" value="TreeGrafter"/>
</dbReference>
<dbReference type="GO" id="GO:0004799">
    <property type="term" value="F:thymidylate synthase activity"/>
    <property type="evidence" value="ECO:0007669"/>
    <property type="project" value="UniProtKB-UniRule"/>
</dbReference>
<dbReference type="GO" id="GO:0006231">
    <property type="term" value="P:dTMP biosynthetic process"/>
    <property type="evidence" value="ECO:0007669"/>
    <property type="project" value="UniProtKB-UniRule"/>
</dbReference>
<dbReference type="GO" id="GO:0006235">
    <property type="term" value="P:dTTP biosynthetic process"/>
    <property type="evidence" value="ECO:0007669"/>
    <property type="project" value="UniProtKB-UniRule"/>
</dbReference>
<dbReference type="GO" id="GO:0032259">
    <property type="term" value="P:methylation"/>
    <property type="evidence" value="ECO:0007669"/>
    <property type="project" value="UniProtKB-KW"/>
</dbReference>
<dbReference type="CDD" id="cd00351">
    <property type="entry name" value="TS_Pyrimidine_HMase"/>
    <property type="match status" value="1"/>
</dbReference>
<dbReference type="Gene3D" id="3.30.572.10">
    <property type="entry name" value="Thymidylate synthase/dCMP hydroxymethylase domain"/>
    <property type="match status" value="1"/>
</dbReference>
<dbReference type="HAMAP" id="MF_00008">
    <property type="entry name" value="Thymidy_synth_bact"/>
    <property type="match status" value="1"/>
</dbReference>
<dbReference type="InterPro" id="IPR045097">
    <property type="entry name" value="Thymidate_synth/dCMP_Mease"/>
</dbReference>
<dbReference type="InterPro" id="IPR023451">
    <property type="entry name" value="Thymidate_synth/dCMP_Mease_dom"/>
</dbReference>
<dbReference type="InterPro" id="IPR036926">
    <property type="entry name" value="Thymidate_synth/dCMP_Mease_sf"/>
</dbReference>
<dbReference type="InterPro" id="IPR000398">
    <property type="entry name" value="Thymidylate_synthase"/>
</dbReference>
<dbReference type="InterPro" id="IPR020940">
    <property type="entry name" value="Thymidylate_synthase_AS"/>
</dbReference>
<dbReference type="NCBIfam" id="NF002496">
    <property type="entry name" value="PRK01827.1-2"/>
    <property type="match status" value="1"/>
</dbReference>
<dbReference type="NCBIfam" id="TIGR03284">
    <property type="entry name" value="thym_sym"/>
    <property type="match status" value="1"/>
</dbReference>
<dbReference type="PANTHER" id="PTHR11548:SF9">
    <property type="entry name" value="THYMIDYLATE SYNTHASE"/>
    <property type="match status" value="1"/>
</dbReference>
<dbReference type="PANTHER" id="PTHR11548">
    <property type="entry name" value="THYMIDYLATE SYNTHASE 1"/>
    <property type="match status" value="1"/>
</dbReference>
<dbReference type="Pfam" id="PF00303">
    <property type="entry name" value="Thymidylat_synt"/>
    <property type="match status" value="1"/>
</dbReference>
<dbReference type="PRINTS" id="PR00108">
    <property type="entry name" value="THYMDSNTHASE"/>
</dbReference>
<dbReference type="SUPFAM" id="SSF55831">
    <property type="entry name" value="Thymidylate synthase/dCMP hydroxymethylase"/>
    <property type="match status" value="1"/>
</dbReference>
<dbReference type="PROSITE" id="PS00091">
    <property type="entry name" value="THYMIDYLATE_SYNTHASE"/>
    <property type="match status" value="1"/>
</dbReference>
<comment type="function">
    <text evidence="1">Catalyzes the reductive methylation of 2'-deoxyuridine-5'-monophosphate (dUMP) to 2'-deoxythymidine-5'-monophosphate (dTMP) while utilizing 5,10-methylenetetrahydrofolate (mTHF) as the methyl donor and reductant in the reaction, yielding dihydrofolate (DHF) as a by-product. This enzymatic reaction provides an intracellular de novo source of dTMP, an essential precursor for DNA biosynthesis.</text>
</comment>
<comment type="catalytic activity">
    <reaction evidence="1">
        <text>dUMP + (6R)-5,10-methylene-5,6,7,8-tetrahydrofolate = 7,8-dihydrofolate + dTMP</text>
        <dbReference type="Rhea" id="RHEA:12104"/>
        <dbReference type="ChEBI" id="CHEBI:15636"/>
        <dbReference type="ChEBI" id="CHEBI:57451"/>
        <dbReference type="ChEBI" id="CHEBI:63528"/>
        <dbReference type="ChEBI" id="CHEBI:246422"/>
        <dbReference type="EC" id="2.1.1.45"/>
    </reaction>
</comment>
<comment type="pathway">
    <text evidence="1">Pyrimidine metabolism; dTTP biosynthesis.</text>
</comment>
<comment type="subunit">
    <text evidence="1">Homodimer.</text>
</comment>
<comment type="subcellular location">
    <subcellularLocation>
        <location evidence="1">Cytoplasm</location>
    </subcellularLocation>
</comment>
<comment type="similarity">
    <text evidence="1">Belongs to the thymidylate synthase family. Bacterial-type ThyA subfamily.</text>
</comment>
<proteinExistence type="inferred from homology"/>
<keyword id="KW-0963">Cytoplasm</keyword>
<keyword id="KW-0489">Methyltransferase</keyword>
<keyword id="KW-0545">Nucleotide biosynthesis</keyword>
<keyword id="KW-1185">Reference proteome</keyword>
<keyword id="KW-0808">Transferase</keyword>
<gene>
    <name evidence="1" type="primary">thyA</name>
    <name type="ordered locus">LBA0901</name>
</gene>
<name>TYSY_LACAC</name>
<accession>Q5FKL6</accession>
<sequence>MAILEQPYLDLINKIMIEGHDKNDRTGTGTRSYFGAQMRFDLSKGFPILTTKKVPFGLIKSELLWFLRGDTNIRFLLEHKNHIWDEWAFKNWVNSDEYTGPDMTDFGLRSQSDPEFNKIYQAELKKFDRRILDDENFAKKYGNLGDVYGAQWRHWQKRDGSFIDQIENVIEQIKNNPDSRRMIVTAWNPEDVPTSALPPCHVMFQFYVVDGKISVQLYQRSGDMFLGVPFNIASYALLLNMIARETGLQVGEFIHTLGDAHIYSNHFSQVKEMLSRKPYESPQLWLNPEKKHIEDFDMQDIKLVDYKHHGTIKAPVAV</sequence>